<gene>
    <name evidence="2" type="primary">rpsL</name>
    <name type="ordered locus">Ldb0392</name>
</gene>
<accession>Q1GBM2</accession>
<comment type="function">
    <text evidence="2">With S4 and S5 plays an important role in translational accuracy.</text>
</comment>
<comment type="function">
    <text evidence="2">Interacts with and stabilizes bases of the 16S rRNA that are involved in tRNA selection in the A site and with the mRNA backbone. Located at the interface of the 30S and 50S subunits, it traverses the body of the 30S subunit contacting proteins on the other side and probably holding the rRNA structure together. The combined cluster of proteins S8, S12 and S17 appears to hold together the shoulder and platform of the 30S subunit.</text>
</comment>
<comment type="subunit">
    <text evidence="2">Part of the 30S ribosomal subunit. Contacts proteins S8 and S17. May interact with IF1 in the 30S initiation complex.</text>
</comment>
<comment type="similarity">
    <text evidence="2">Belongs to the universal ribosomal protein uS12 family.</text>
</comment>
<evidence type="ECO:0000250" key="1"/>
<evidence type="ECO:0000255" key="2">
    <source>
        <dbReference type="HAMAP-Rule" id="MF_00403"/>
    </source>
</evidence>
<evidence type="ECO:0000256" key="3">
    <source>
        <dbReference type="SAM" id="MobiDB-lite"/>
    </source>
</evidence>
<evidence type="ECO:0000305" key="4"/>
<protein>
    <recommendedName>
        <fullName evidence="2">Small ribosomal subunit protein uS12</fullName>
    </recommendedName>
    <alternativeName>
        <fullName evidence="4">30S ribosomal protein S12</fullName>
    </alternativeName>
</protein>
<dbReference type="EMBL" id="CR954253">
    <property type="protein sequence ID" value="CAI97227.1"/>
    <property type="molecule type" value="Genomic_DNA"/>
</dbReference>
<dbReference type="RefSeq" id="WP_003613306.1">
    <property type="nucleotide sequence ID" value="NZ_JQAV01000001.1"/>
</dbReference>
<dbReference type="SMR" id="Q1GBM2"/>
<dbReference type="STRING" id="390333.Ldb0392"/>
<dbReference type="KEGG" id="ldb:Ldb0392"/>
<dbReference type="PATRIC" id="fig|390333.13.peg.398"/>
<dbReference type="eggNOG" id="COG0048">
    <property type="taxonomic scope" value="Bacteria"/>
</dbReference>
<dbReference type="HOGENOM" id="CLU_104295_1_1_9"/>
<dbReference type="BioCyc" id="LDEL390333:LDB_RS01655-MONOMER"/>
<dbReference type="Proteomes" id="UP000001259">
    <property type="component" value="Chromosome"/>
</dbReference>
<dbReference type="GO" id="GO:0015935">
    <property type="term" value="C:small ribosomal subunit"/>
    <property type="evidence" value="ECO:0007669"/>
    <property type="project" value="InterPro"/>
</dbReference>
<dbReference type="GO" id="GO:0019843">
    <property type="term" value="F:rRNA binding"/>
    <property type="evidence" value="ECO:0007669"/>
    <property type="project" value="UniProtKB-UniRule"/>
</dbReference>
<dbReference type="GO" id="GO:0003735">
    <property type="term" value="F:structural constituent of ribosome"/>
    <property type="evidence" value="ECO:0007669"/>
    <property type="project" value="InterPro"/>
</dbReference>
<dbReference type="GO" id="GO:0000049">
    <property type="term" value="F:tRNA binding"/>
    <property type="evidence" value="ECO:0007669"/>
    <property type="project" value="UniProtKB-UniRule"/>
</dbReference>
<dbReference type="GO" id="GO:0006412">
    <property type="term" value="P:translation"/>
    <property type="evidence" value="ECO:0007669"/>
    <property type="project" value="UniProtKB-UniRule"/>
</dbReference>
<dbReference type="CDD" id="cd03368">
    <property type="entry name" value="Ribosomal_S12"/>
    <property type="match status" value="1"/>
</dbReference>
<dbReference type="FunFam" id="2.40.50.140:FF:000001">
    <property type="entry name" value="30S ribosomal protein S12"/>
    <property type="match status" value="1"/>
</dbReference>
<dbReference type="Gene3D" id="2.40.50.140">
    <property type="entry name" value="Nucleic acid-binding proteins"/>
    <property type="match status" value="1"/>
</dbReference>
<dbReference type="HAMAP" id="MF_00403_B">
    <property type="entry name" value="Ribosomal_uS12_B"/>
    <property type="match status" value="1"/>
</dbReference>
<dbReference type="InterPro" id="IPR012340">
    <property type="entry name" value="NA-bd_OB-fold"/>
</dbReference>
<dbReference type="InterPro" id="IPR006032">
    <property type="entry name" value="Ribosomal_uS12"/>
</dbReference>
<dbReference type="InterPro" id="IPR005679">
    <property type="entry name" value="Ribosomal_uS12_bac"/>
</dbReference>
<dbReference type="NCBIfam" id="TIGR00981">
    <property type="entry name" value="rpsL_bact"/>
    <property type="match status" value="1"/>
</dbReference>
<dbReference type="PANTHER" id="PTHR11652">
    <property type="entry name" value="30S RIBOSOMAL PROTEIN S12 FAMILY MEMBER"/>
    <property type="match status" value="1"/>
</dbReference>
<dbReference type="Pfam" id="PF00164">
    <property type="entry name" value="Ribosom_S12_S23"/>
    <property type="match status" value="1"/>
</dbReference>
<dbReference type="PIRSF" id="PIRSF002133">
    <property type="entry name" value="Ribosomal_S12/S23"/>
    <property type="match status" value="1"/>
</dbReference>
<dbReference type="PRINTS" id="PR01034">
    <property type="entry name" value="RIBOSOMALS12"/>
</dbReference>
<dbReference type="SUPFAM" id="SSF50249">
    <property type="entry name" value="Nucleic acid-binding proteins"/>
    <property type="match status" value="1"/>
</dbReference>
<dbReference type="PROSITE" id="PS00055">
    <property type="entry name" value="RIBOSOMAL_S12"/>
    <property type="match status" value="1"/>
</dbReference>
<sequence>MPTINQLVRKGRHSKTTKSKSPALNYSYNSMKKEQVFNPAPQMRGVATRVGTMTPKKPNSALRKYARVRLSNLTEVTAYIPGEGHNLQEHSVVLIRGGRVKDLPGVRYHIVRGALDTAGVDGRKQARSKYGAKKG</sequence>
<feature type="chain" id="PRO_0000263565" description="Small ribosomal subunit protein uS12">
    <location>
        <begin position="1"/>
        <end position="135"/>
    </location>
</feature>
<feature type="region of interest" description="Disordered" evidence="3">
    <location>
        <begin position="1"/>
        <end position="24"/>
    </location>
</feature>
<feature type="compositionally biased region" description="Basic residues" evidence="3">
    <location>
        <begin position="9"/>
        <end position="18"/>
    </location>
</feature>
<feature type="modified residue" description="3-methylthioaspartic acid" evidence="1">
    <location>
        <position position="102"/>
    </location>
</feature>
<keyword id="KW-0488">Methylation</keyword>
<keyword id="KW-1185">Reference proteome</keyword>
<keyword id="KW-0687">Ribonucleoprotein</keyword>
<keyword id="KW-0689">Ribosomal protein</keyword>
<keyword id="KW-0694">RNA-binding</keyword>
<keyword id="KW-0699">rRNA-binding</keyword>
<keyword id="KW-0820">tRNA-binding</keyword>
<organism>
    <name type="scientific">Lactobacillus delbrueckii subsp. bulgaricus (strain ATCC 11842 / DSM 20081 / BCRC 10696 / JCM 1002 / NBRC 13953 / NCIMB 11778 / NCTC 12712 / WDCM 00102 / Lb 14)</name>
    <dbReference type="NCBI Taxonomy" id="390333"/>
    <lineage>
        <taxon>Bacteria</taxon>
        <taxon>Bacillati</taxon>
        <taxon>Bacillota</taxon>
        <taxon>Bacilli</taxon>
        <taxon>Lactobacillales</taxon>
        <taxon>Lactobacillaceae</taxon>
        <taxon>Lactobacillus</taxon>
    </lineage>
</organism>
<proteinExistence type="inferred from homology"/>
<name>RS12_LACDA</name>
<reference key="1">
    <citation type="journal article" date="2006" name="Proc. Natl. Acad. Sci. U.S.A.">
        <title>The complete genome sequence of Lactobacillus bulgaricus reveals extensive and ongoing reductive evolution.</title>
        <authorList>
            <person name="van de Guchte M."/>
            <person name="Penaud S."/>
            <person name="Grimaldi C."/>
            <person name="Barbe V."/>
            <person name="Bryson K."/>
            <person name="Nicolas P."/>
            <person name="Robert C."/>
            <person name="Oztas S."/>
            <person name="Mangenot S."/>
            <person name="Couloux A."/>
            <person name="Loux V."/>
            <person name="Dervyn R."/>
            <person name="Bossy R."/>
            <person name="Bolotin A."/>
            <person name="Batto J.-M."/>
            <person name="Walunas T."/>
            <person name="Gibrat J.-F."/>
            <person name="Bessieres P."/>
            <person name="Weissenbach J."/>
            <person name="Ehrlich S.D."/>
            <person name="Maguin E."/>
        </authorList>
    </citation>
    <scope>NUCLEOTIDE SEQUENCE [LARGE SCALE GENOMIC DNA]</scope>
    <source>
        <strain>ATCC 11842 / DSM 20081 / BCRC 10696 / JCM 1002 / NBRC 13953 / NCIMB 11778 / NCTC 12712 / WDCM 00102 / Lb 14</strain>
    </source>
</reference>